<evidence type="ECO:0000255" key="1">
    <source>
        <dbReference type="HAMAP-Rule" id="MF_01496"/>
    </source>
</evidence>
<evidence type="ECO:0000305" key="2"/>
<protein>
    <recommendedName>
        <fullName evidence="1">Photosystem II CP43 reaction center protein</fullName>
    </recommendedName>
    <alternativeName>
        <fullName evidence="1">PSII 43 kDa protein</fullName>
    </alternativeName>
    <alternativeName>
        <fullName evidence="1">Protein CP-43</fullName>
    </alternativeName>
</protein>
<accession>Q1ACJ6</accession>
<organism>
    <name type="scientific">Chara vulgaris</name>
    <name type="common">Common stonewort</name>
    <dbReference type="NCBI Taxonomy" id="55564"/>
    <lineage>
        <taxon>Eukaryota</taxon>
        <taxon>Viridiplantae</taxon>
        <taxon>Streptophyta</taxon>
        <taxon>Charophyceae</taxon>
        <taxon>Charales</taxon>
        <taxon>Characeae</taxon>
        <taxon>Chara</taxon>
    </lineage>
</organism>
<gene>
    <name evidence="1" type="primary">psbC</name>
</gene>
<feature type="propeptide" id="PRO_0000431122" evidence="1">
    <location>
        <begin position="1"/>
        <end position="14"/>
    </location>
</feature>
<feature type="chain" id="PRO_0000361341" description="Photosystem II CP43 reaction center protein" evidence="1">
    <location>
        <begin position="15"/>
        <end position="473"/>
    </location>
</feature>
<feature type="transmembrane region" description="Helical" evidence="1">
    <location>
        <begin position="69"/>
        <end position="93"/>
    </location>
</feature>
<feature type="transmembrane region" description="Helical" evidence="1">
    <location>
        <begin position="134"/>
        <end position="155"/>
    </location>
</feature>
<feature type="transmembrane region" description="Helical" evidence="1">
    <location>
        <begin position="178"/>
        <end position="200"/>
    </location>
</feature>
<feature type="transmembrane region" description="Helical" evidence="1">
    <location>
        <begin position="255"/>
        <end position="275"/>
    </location>
</feature>
<feature type="transmembrane region" description="Helical" evidence="1">
    <location>
        <begin position="291"/>
        <end position="312"/>
    </location>
</feature>
<feature type="transmembrane region" description="Helical" evidence="1">
    <location>
        <begin position="447"/>
        <end position="471"/>
    </location>
</feature>
<feature type="binding site" evidence="1">
    <location>
        <position position="367"/>
    </location>
    <ligand>
        <name>[CaMn4O5] cluster</name>
        <dbReference type="ChEBI" id="CHEBI:189552"/>
    </ligand>
</feature>
<feature type="modified residue" description="N-acetylthreonine" evidence="1">
    <location>
        <position position="15"/>
    </location>
</feature>
<feature type="modified residue" description="Phosphothreonine" evidence="1">
    <location>
        <position position="15"/>
    </location>
</feature>
<sequence length="473" mass="51906">MKILYSLRRYFHVETLFNGTLALGGRDQESTGFAWWAGNARLINLSGKLLGAHVAHAGLIVFWAGAMNLFEVAHFVPEKPMYEQGLILLPHLATLGWGIGPGGEVINTFPYFVSGVLHLISSAVLGFGGVYHALIGPETLEESFPFFGYVWKDKNKMTTILGIHLILLGAGALLLVAKAIWFGGLYDTWAPGGGDVRKITNITLNPSTIFGYLLKSPFGGEGWIVSVDNMEDIVGGHVWLGIICIFGGIWHILTKPFAWARRAFVWSGEAYLSYSLAAISLMGFIACCFVWFNNTAYPSEFYGPTGPEASQAQAFSFLVRDQRLGANVGSAQGPTGLGKYLMRSPTGEIIFGGETMRFWDLRAPWLEPLRGPNGLDLSKLKKDIQPWQERRSAEYMTHAPLGSLNSVGGVATEINAVNYVSPRSWLSTSHFVLGFFFFVGHLWHAGRARAAAAGFEKGIDRDSEPVLYMEPLN</sequence>
<keyword id="KW-0007">Acetylation</keyword>
<keyword id="KW-0148">Chlorophyll</keyword>
<keyword id="KW-0150">Chloroplast</keyword>
<keyword id="KW-0157">Chromophore</keyword>
<keyword id="KW-0464">Manganese</keyword>
<keyword id="KW-0472">Membrane</keyword>
<keyword id="KW-0479">Metal-binding</keyword>
<keyword id="KW-0597">Phosphoprotein</keyword>
<keyword id="KW-0602">Photosynthesis</keyword>
<keyword id="KW-0604">Photosystem II</keyword>
<keyword id="KW-0934">Plastid</keyword>
<keyword id="KW-0793">Thylakoid</keyword>
<keyword id="KW-0812">Transmembrane</keyword>
<keyword id="KW-1133">Transmembrane helix</keyword>
<proteinExistence type="inferred from homology"/>
<name>PSBC_CHAVU</name>
<reference key="1">
    <citation type="journal article" date="2006" name="Mol. Biol. Evol.">
        <title>The chloroplast genome sequence of Chara vulgaris sheds new light into the closest green algal relatives of land plants.</title>
        <authorList>
            <person name="Turmel M."/>
            <person name="Otis C."/>
            <person name="Lemieux C."/>
        </authorList>
    </citation>
    <scope>NUCLEOTIDE SEQUENCE [LARGE SCALE GENOMIC DNA]</scope>
</reference>
<geneLocation type="chloroplast"/>
<dbReference type="EMBL" id="DQ229107">
    <property type="protein sequence ID" value="ABA61937.1"/>
    <property type="status" value="ALT_INIT"/>
    <property type="molecule type" value="Genomic_DNA"/>
</dbReference>
<dbReference type="RefSeq" id="YP_635751.2">
    <property type="nucleotide sequence ID" value="NC_008097.1"/>
</dbReference>
<dbReference type="SMR" id="Q1ACJ6"/>
<dbReference type="GeneID" id="4100224"/>
<dbReference type="GO" id="GO:0009535">
    <property type="term" value="C:chloroplast thylakoid membrane"/>
    <property type="evidence" value="ECO:0007669"/>
    <property type="project" value="UniProtKB-SubCell"/>
</dbReference>
<dbReference type="GO" id="GO:0009523">
    <property type="term" value="C:photosystem II"/>
    <property type="evidence" value="ECO:0007669"/>
    <property type="project" value="UniProtKB-KW"/>
</dbReference>
<dbReference type="GO" id="GO:0016168">
    <property type="term" value="F:chlorophyll binding"/>
    <property type="evidence" value="ECO:0007669"/>
    <property type="project" value="UniProtKB-UniRule"/>
</dbReference>
<dbReference type="GO" id="GO:0045156">
    <property type="term" value="F:electron transporter, transferring electrons within the cyclic electron transport pathway of photosynthesis activity"/>
    <property type="evidence" value="ECO:0007669"/>
    <property type="project" value="InterPro"/>
</dbReference>
<dbReference type="GO" id="GO:0046872">
    <property type="term" value="F:metal ion binding"/>
    <property type="evidence" value="ECO:0007669"/>
    <property type="project" value="UniProtKB-KW"/>
</dbReference>
<dbReference type="GO" id="GO:0009772">
    <property type="term" value="P:photosynthetic electron transport in photosystem II"/>
    <property type="evidence" value="ECO:0007669"/>
    <property type="project" value="InterPro"/>
</dbReference>
<dbReference type="FunFam" id="1.10.10.670:FF:000001">
    <property type="entry name" value="Photosystem II CP43 reaction center protein"/>
    <property type="match status" value="1"/>
</dbReference>
<dbReference type="Gene3D" id="1.10.10.670">
    <property type="entry name" value="photosystem ii from thermosynechococcus elongatus"/>
    <property type="match status" value="1"/>
</dbReference>
<dbReference type="HAMAP" id="MF_01496">
    <property type="entry name" value="PSII_PsbC_CP43"/>
    <property type="match status" value="1"/>
</dbReference>
<dbReference type="InterPro" id="IPR000932">
    <property type="entry name" value="PS_antenna-like"/>
</dbReference>
<dbReference type="InterPro" id="IPR036001">
    <property type="entry name" value="PS_II_antenna-like_sf"/>
</dbReference>
<dbReference type="InterPro" id="IPR005869">
    <property type="entry name" value="PSII_PsbC"/>
</dbReference>
<dbReference type="InterPro" id="IPR044900">
    <property type="entry name" value="PSII_PsbC_sf"/>
</dbReference>
<dbReference type="NCBIfam" id="TIGR03041">
    <property type="entry name" value="PS_antenn_a_b"/>
    <property type="match status" value="1"/>
</dbReference>
<dbReference type="NCBIfam" id="TIGR01153">
    <property type="entry name" value="psbC"/>
    <property type="match status" value="1"/>
</dbReference>
<dbReference type="Pfam" id="PF00421">
    <property type="entry name" value="PSII"/>
    <property type="match status" value="1"/>
</dbReference>
<dbReference type="SUPFAM" id="SSF161077">
    <property type="entry name" value="Photosystem II antenna protein-like"/>
    <property type="match status" value="1"/>
</dbReference>
<comment type="function">
    <text evidence="1">One of the components of the core complex of photosystem II (PSII). It binds chlorophyll and helps catalyze the primary light-induced photochemical processes of PSII. PSII is a light-driven water:plastoquinone oxidoreductase, using light energy to abstract electrons from H(2)O, generating O(2) and a proton gradient subsequently used for ATP formation.</text>
</comment>
<comment type="cofactor">
    <text evidence="1">Binds multiple chlorophylls and provides some of the ligands for the Ca-4Mn-5O cluster of the oxygen-evolving complex. It may also provide a ligand for a Cl- that is required for oxygen evolution. PSII binds additional chlorophylls, carotenoids and specific lipids.</text>
</comment>
<comment type="subunit">
    <text evidence="1">PSII is composed of 1 copy each of membrane proteins PsbA, PsbB, PsbC, PsbD, PsbE, PsbF, PsbH, PsbI, PsbJ, PsbK, PsbL, PsbM, PsbT, PsbX, PsbY, PsbZ, Psb30/Ycf12, at least 3 peripheral proteins of the oxygen-evolving complex and a large number of cofactors. It forms dimeric complexes.</text>
</comment>
<comment type="subcellular location">
    <subcellularLocation>
        <location evidence="1">Plastid</location>
        <location evidence="1">Chloroplast thylakoid membrane</location>
        <topology evidence="1">Multi-pass membrane protein</topology>
    </subcellularLocation>
</comment>
<comment type="similarity">
    <text evidence="1">Belongs to the PsbB/PsbC family. PsbC subfamily.</text>
</comment>
<comment type="sequence caution" evidence="2">
    <conflict type="erroneous initiation">
        <sequence resource="EMBL-CDS" id="ABA61937"/>
    </conflict>
    <text>Extended N-terminus.</text>
</comment>